<name>NO66_AEDAE</name>
<keyword id="KW-0156">Chromatin regulator</keyword>
<keyword id="KW-0223">Dioxygenase</keyword>
<keyword id="KW-0408">Iron</keyword>
<keyword id="KW-0479">Metal-binding</keyword>
<keyword id="KW-0539">Nucleus</keyword>
<keyword id="KW-0560">Oxidoreductase</keyword>
<keyword id="KW-1185">Reference proteome</keyword>
<keyword id="KW-0678">Repressor</keyword>
<keyword id="KW-0804">Transcription</keyword>
<keyword id="KW-0805">Transcription regulation</keyword>
<accession>Q16W06</accession>
<comment type="function">
    <text evidence="1">Oxygenase that can act as both a histone lysine demethylase and a ribosomal histidine hydroxylase. Specifically demethylates 'Lys-4' (H3K4me) and 'Lys-36' (H3K36me) of histone H3, thereby playing a central role in histone code (By similarity).</text>
</comment>
<comment type="catalytic activity">
    <reaction>
        <text>N(6),N(6)-dimethyl-L-lysyl(36)-[histone H3] + 2 2-oxoglutarate + 2 O2 = L-lysyl(36)-[histone H3] + 2 formaldehyde + 2 succinate + 2 CO2</text>
        <dbReference type="Rhea" id="RHEA:42032"/>
        <dbReference type="Rhea" id="RHEA-COMP:9785"/>
        <dbReference type="Rhea" id="RHEA-COMP:9787"/>
        <dbReference type="ChEBI" id="CHEBI:15379"/>
        <dbReference type="ChEBI" id="CHEBI:16526"/>
        <dbReference type="ChEBI" id="CHEBI:16810"/>
        <dbReference type="ChEBI" id="CHEBI:16842"/>
        <dbReference type="ChEBI" id="CHEBI:29969"/>
        <dbReference type="ChEBI" id="CHEBI:30031"/>
        <dbReference type="ChEBI" id="CHEBI:61976"/>
        <dbReference type="EC" id="1.14.11.27"/>
    </reaction>
</comment>
<comment type="cofactor">
    <cofactor evidence="1">
        <name>Fe(2+)</name>
        <dbReference type="ChEBI" id="CHEBI:29033"/>
    </cofactor>
    <text evidence="1">Binds 1 Fe(2+) ion per subunit.</text>
</comment>
<comment type="subcellular location">
    <subcellularLocation>
        <location evidence="1">Nucleus</location>
    </subcellularLocation>
</comment>
<comment type="similarity">
    <text evidence="4">Belongs to the ROX family. NO66 subfamily.</text>
</comment>
<evidence type="ECO:0000250" key="1"/>
<evidence type="ECO:0000255" key="2">
    <source>
        <dbReference type="PROSITE-ProRule" id="PRU00538"/>
    </source>
</evidence>
<evidence type="ECO:0000256" key="3">
    <source>
        <dbReference type="SAM" id="MobiDB-lite"/>
    </source>
</evidence>
<evidence type="ECO:0000305" key="4"/>
<dbReference type="EC" id="1.14.11.-"/>
<dbReference type="EC" id="1.14.11.27"/>
<dbReference type="EMBL" id="CH477578">
    <property type="protein sequence ID" value="EAT38759.1"/>
    <property type="molecule type" value="Genomic_DNA"/>
</dbReference>
<dbReference type="RefSeq" id="XP_001653808.1">
    <property type="nucleotide sequence ID" value="XM_001653758.1"/>
</dbReference>
<dbReference type="SMR" id="Q16W06"/>
<dbReference type="FunCoup" id="Q16W06">
    <property type="interactions" value="1851"/>
</dbReference>
<dbReference type="STRING" id="7159.Q16W06"/>
<dbReference type="PaxDb" id="7159-AAEL009382-PA"/>
<dbReference type="GeneID" id="5571894"/>
<dbReference type="KEGG" id="aag:5571894"/>
<dbReference type="CTD" id="31374"/>
<dbReference type="VEuPathDB" id="VectorBase:AAEL009382"/>
<dbReference type="eggNOG" id="KOG3706">
    <property type="taxonomic scope" value="Eukaryota"/>
</dbReference>
<dbReference type="HOGENOM" id="CLU_013645_4_1_1"/>
<dbReference type="InParanoid" id="Q16W06"/>
<dbReference type="OMA" id="HAIALCI"/>
<dbReference type="OrthoDB" id="425950at2759"/>
<dbReference type="PhylomeDB" id="Q16W06"/>
<dbReference type="Proteomes" id="UP000008820">
    <property type="component" value="Unassembled WGS sequence"/>
</dbReference>
<dbReference type="Proteomes" id="UP000682892">
    <property type="component" value="Unassembled WGS sequence"/>
</dbReference>
<dbReference type="GO" id="GO:0005730">
    <property type="term" value="C:nucleolus"/>
    <property type="evidence" value="ECO:0007669"/>
    <property type="project" value="TreeGrafter"/>
</dbReference>
<dbReference type="GO" id="GO:0005634">
    <property type="term" value="C:nucleus"/>
    <property type="evidence" value="ECO:0000250"/>
    <property type="project" value="UniProtKB"/>
</dbReference>
<dbReference type="GO" id="GO:0016706">
    <property type="term" value="F:2-oxoglutarate-dependent dioxygenase activity"/>
    <property type="evidence" value="ECO:0000250"/>
    <property type="project" value="UniProtKB"/>
</dbReference>
<dbReference type="GO" id="GO:0051864">
    <property type="term" value="F:histone H3K36 demethylase activity"/>
    <property type="evidence" value="ECO:0000250"/>
    <property type="project" value="UniProtKB"/>
</dbReference>
<dbReference type="GO" id="GO:0140680">
    <property type="term" value="F:histone H3K36me/H3K36me2 demethylase activity"/>
    <property type="evidence" value="ECO:0007669"/>
    <property type="project" value="UniProtKB-EC"/>
</dbReference>
<dbReference type="GO" id="GO:0034647">
    <property type="term" value="F:histone H3K4me/H3K4me2/H3K4me3 demethylase activity"/>
    <property type="evidence" value="ECO:0000250"/>
    <property type="project" value="UniProtKB"/>
</dbReference>
<dbReference type="GO" id="GO:0005506">
    <property type="term" value="F:iron ion binding"/>
    <property type="evidence" value="ECO:0000250"/>
    <property type="project" value="UniProtKB"/>
</dbReference>
<dbReference type="GO" id="GO:0045892">
    <property type="term" value="P:negative regulation of DNA-templated transcription"/>
    <property type="evidence" value="ECO:0000250"/>
    <property type="project" value="UniProtKB"/>
</dbReference>
<dbReference type="FunFam" id="2.60.120.650:FF:000013">
    <property type="entry name" value="Ribosomal oxygenase 1"/>
    <property type="match status" value="1"/>
</dbReference>
<dbReference type="FunFam" id="1.10.10.1500:FF:000001">
    <property type="entry name" value="ribosomal oxygenase 1 isoform X1"/>
    <property type="match status" value="1"/>
</dbReference>
<dbReference type="FunFam" id="3.90.930.40:FF:000001">
    <property type="entry name" value="ribosomal oxygenase 1 isoform X1"/>
    <property type="match status" value="1"/>
</dbReference>
<dbReference type="Gene3D" id="3.90.930.40">
    <property type="match status" value="1"/>
</dbReference>
<dbReference type="Gene3D" id="2.60.120.650">
    <property type="entry name" value="Cupin"/>
    <property type="match status" value="1"/>
</dbReference>
<dbReference type="Gene3D" id="1.10.10.1500">
    <property type="entry name" value="JmjC domain-containing ribosomal oxygenase (ROX), dimer domain"/>
    <property type="match status" value="1"/>
</dbReference>
<dbReference type="InterPro" id="IPR003347">
    <property type="entry name" value="JmjC_dom"/>
</dbReference>
<dbReference type="InterPro" id="IPR039994">
    <property type="entry name" value="NO66-like"/>
</dbReference>
<dbReference type="InterPro" id="IPR049043">
    <property type="entry name" value="RIOX1/NO66-like_C_WH"/>
</dbReference>
<dbReference type="PANTHER" id="PTHR13096">
    <property type="entry name" value="MINA53 MYC INDUCED NUCLEAR ANTIGEN"/>
    <property type="match status" value="1"/>
</dbReference>
<dbReference type="PANTHER" id="PTHR13096:SF8">
    <property type="entry name" value="RIBOSOMAL OXYGENASE 1"/>
    <property type="match status" value="1"/>
</dbReference>
<dbReference type="Pfam" id="PF08007">
    <property type="entry name" value="JmjC_2"/>
    <property type="match status" value="1"/>
</dbReference>
<dbReference type="Pfam" id="PF21233">
    <property type="entry name" value="RIOX1_C_WH"/>
    <property type="match status" value="1"/>
</dbReference>
<dbReference type="SUPFAM" id="SSF51197">
    <property type="entry name" value="Clavaminate synthase-like"/>
    <property type="match status" value="1"/>
</dbReference>
<dbReference type="PROSITE" id="PS51184">
    <property type="entry name" value="JMJC"/>
    <property type="match status" value="1"/>
</dbReference>
<proteinExistence type="inferred from homology"/>
<sequence>MSAVSSIFDTPIPSAAKSSPSGSNKRPLAQNGHHSGEKQSKKSKKASKKQLIDLLVQEHARELSQNDSSASTVSTPKKKKKKNASASDINTSASKNVNAAKKKPKEGLKINLQNSKKKRKNFEVLNSSQQHADDALVETSFNGESLKNNSNHSTPVSKKPKKKNKQMPHPLAGTPNLAIKQEPQTPKANGMQRTSAQDSIVVGREKFAWVIHPTPVEDFMINYWEKKPLLIQRKNPSYYSNLLSRAKIDEMLRQNNIEYTKNIDVTSYREGQRETHNPDGRVLPPDMWSFYEEGCSIRMLNPQTYLPGVYEMNVKLQEFFHCMTGANFYLTPPNSQGFAPHYDDIEAFVLQVEGRKHWKLYSPREPAEMLARVSSPNFTQEEIGTPILEVVLEPGDLLYFPRGIIHQASTVPGHHSLHVTMSVYQKNCWADLLELFFPHALAQAAETHFDLRRGIPLNLHQHFGIVHSDSETPARKQLISHIKSLVDKVFSEDAIDSAVDQLAKRFQHDALPPLISNTEQSTTVYGSSFSHNPDGTVSLRVPFTENSTVRLLRCNVLRLVSEEEKLRIYYHTDNSREYHEYEPNFLEIDQDAALGVELLVKMYPHPVAIRDLPVEDKIEFAKSLWEKGLIVVHGQ</sequence>
<feature type="chain" id="PRO_0000390982" description="Bifunctional lysine-specific demethylase and histidyl-hydroxylase NO66">
    <location>
        <begin position="1"/>
        <end position="635"/>
    </location>
</feature>
<feature type="domain" description="JmjC" evidence="2">
    <location>
        <begin position="295"/>
        <end position="440"/>
    </location>
</feature>
<feature type="region of interest" description="Disordered" evidence="3">
    <location>
        <begin position="1"/>
        <end position="115"/>
    </location>
</feature>
<feature type="region of interest" description="Disordered" evidence="3">
    <location>
        <begin position="141"/>
        <end position="190"/>
    </location>
</feature>
<feature type="compositionally biased region" description="Low complexity" evidence="3">
    <location>
        <begin position="84"/>
        <end position="99"/>
    </location>
</feature>
<feature type="compositionally biased region" description="Polar residues" evidence="3">
    <location>
        <begin position="141"/>
        <end position="156"/>
    </location>
</feature>
<feature type="binding site" evidence="2">
    <location>
        <position position="341"/>
    </location>
    <ligand>
        <name>Fe cation</name>
        <dbReference type="ChEBI" id="CHEBI:24875"/>
        <note>catalytic</note>
    </ligand>
</feature>
<feature type="binding site" evidence="2">
    <location>
        <position position="343"/>
    </location>
    <ligand>
        <name>Fe cation</name>
        <dbReference type="ChEBI" id="CHEBI:24875"/>
        <note>catalytic</note>
    </ligand>
</feature>
<feature type="binding site" evidence="2">
    <location>
        <position position="406"/>
    </location>
    <ligand>
        <name>Fe cation</name>
        <dbReference type="ChEBI" id="CHEBI:24875"/>
        <note>catalytic</note>
    </ligand>
</feature>
<protein>
    <recommendedName>
        <fullName>Bifunctional lysine-specific demethylase and histidyl-hydroxylase NO66</fullName>
        <ecNumber>1.14.11.-</ecNumber>
        <ecNumber>1.14.11.27</ecNumber>
    </recommendedName>
    <alternativeName>
        <fullName>Histone lysine demethylase NO66</fullName>
    </alternativeName>
</protein>
<gene>
    <name type="ORF">AAEL009382</name>
</gene>
<reference key="1">
    <citation type="journal article" date="2007" name="Science">
        <title>Genome sequence of Aedes aegypti, a major arbovirus vector.</title>
        <authorList>
            <person name="Nene V."/>
            <person name="Wortman J.R."/>
            <person name="Lawson D."/>
            <person name="Haas B.J."/>
            <person name="Kodira C.D."/>
            <person name="Tu Z.J."/>
            <person name="Loftus B.J."/>
            <person name="Xi Z."/>
            <person name="Megy K."/>
            <person name="Grabherr M."/>
            <person name="Ren Q."/>
            <person name="Zdobnov E.M."/>
            <person name="Lobo N.F."/>
            <person name="Campbell K.S."/>
            <person name="Brown S.E."/>
            <person name="Bonaldo M.F."/>
            <person name="Zhu J."/>
            <person name="Sinkins S.P."/>
            <person name="Hogenkamp D.G."/>
            <person name="Amedeo P."/>
            <person name="Arensburger P."/>
            <person name="Atkinson P.W."/>
            <person name="Bidwell S.L."/>
            <person name="Biedler J."/>
            <person name="Birney E."/>
            <person name="Bruggner R.V."/>
            <person name="Costas J."/>
            <person name="Coy M.R."/>
            <person name="Crabtree J."/>
            <person name="Crawford M."/>
            <person name="DeBruyn B."/>
            <person name="DeCaprio D."/>
            <person name="Eiglmeier K."/>
            <person name="Eisenstadt E."/>
            <person name="El-Dorry H."/>
            <person name="Gelbart W.M."/>
            <person name="Gomes S.L."/>
            <person name="Hammond M."/>
            <person name="Hannick L.I."/>
            <person name="Hogan J.R."/>
            <person name="Holmes M.H."/>
            <person name="Jaffe D."/>
            <person name="Johnston S.J."/>
            <person name="Kennedy R.C."/>
            <person name="Koo H."/>
            <person name="Kravitz S."/>
            <person name="Kriventseva E.V."/>
            <person name="Kulp D."/>
            <person name="Labutti K."/>
            <person name="Lee E."/>
            <person name="Li S."/>
            <person name="Lovin D.D."/>
            <person name="Mao C."/>
            <person name="Mauceli E."/>
            <person name="Menck C.F."/>
            <person name="Miller J.R."/>
            <person name="Montgomery P."/>
            <person name="Mori A."/>
            <person name="Nascimento A.L."/>
            <person name="Naveira H.F."/>
            <person name="Nusbaum C."/>
            <person name="O'Leary S.B."/>
            <person name="Orvis J."/>
            <person name="Pertea M."/>
            <person name="Quesneville H."/>
            <person name="Reidenbach K.R."/>
            <person name="Rogers Y.-H.C."/>
            <person name="Roth C.W."/>
            <person name="Schneider J.R."/>
            <person name="Schatz M."/>
            <person name="Shumway M."/>
            <person name="Stanke M."/>
            <person name="Stinson E.O."/>
            <person name="Tubio J.M.C."/>
            <person name="Vanzee J.P."/>
            <person name="Verjovski-Almeida S."/>
            <person name="Werner D."/>
            <person name="White O.R."/>
            <person name="Wyder S."/>
            <person name="Zeng Q."/>
            <person name="Zhao Q."/>
            <person name="Zhao Y."/>
            <person name="Hill C.A."/>
            <person name="Raikhel A.S."/>
            <person name="Soares M.B."/>
            <person name="Knudson D.L."/>
            <person name="Lee N.H."/>
            <person name="Galagan J."/>
            <person name="Salzberg S.L."/>
            <person name="Paulsen I.T."/>
            <person name="Dimopoulos G."/>
            <person name="Collins F.H."/>
            <person name="Bruce B."/>
            <person name="Fraser-Liggett C.M."/>
            <person name="Severson D.W."/>
        </authorList>
    </citation>
    <scope>NUCLEOTIDE SEQUENCE [LARGE SCALE GENOMIC DNA]</scope>
    <source>
        <strain>LVPib12</strain>
    </source>
</reference>
<organism>
    <name type="scientific">Aedes aegypti</name>
    <name type="common">Yellowfever mosquito</name>
    <name type="synonym">Culex aegypti</name>
    <dbReference type="NCBI Taxonomy" id="7159"/>
    <lineage>
        <taxon>Eukaryota</taxon>
        <taxon>Metazoa</taxon>
        <taxon>Ecdysozoa</taxon>
        <taxon>Arthropoda</taxon>
        <taxon>Hexapoda</taxon>
        <taxon>Insecta</taxon>
        <taxon>Pterygota</taxon>
        <taxon>Neoptera</taxon>
        <taxon>Endopterygota</taxon>
        <taxon>Diptera</taxon>
        <taxon>Nematocera</taxon>
        <taxon>Culicoidea</taxon>
        <taxon>Culicidae</taxon>
        <taxon>Culicinae</taxon>
        <taxon>Aedini</taxon>
        <taxon>Aedes</taxon>
        <taxon>Stegomyia</taxon>
    </lineage>
</organism>